<name>IDTP_CLAPA</name>
<proteinExistence type="inferred from homology"/>
<comment type="function">
    <text evidence="3 4 5 8">Cytochrome P450 monooxygenase; part of the gene cluster that mediates the biosynthesis of paspalitrems, indole-diterpene (IDT) mycotoxins that are potent tremorgens in mammals (PubMed:23468653, PubMed:29457197, PubMed:32077051). The geranylgeranyl diphosphate (GGPP) synthase idtG is proposed to catalyze the first step in IDT biosynthesis via catalysis of a series of iterative condensations of isopentenyl diphosphate (IPP) with dimethylallyl diphosphate (DMAPP), geranyl diphosphate (GPP), and farnesyl diphosphate (FPP), to form GGPP (Probable). Condensation of indole-3-glycerol phosphate with GGPP by the prenyltransferase idtC then forms 3-geranylgeranylindole (3-GGI) (Probable). Epoxidation of the two terminal alkenes of the geranylgeranyl moiety by the FAD-dependent monooxygenase idtM, and cyclization by the terpene cyclase idtB then leads to the production of paspaline (Probable). The cytochrome P450 monooxygenase idtP then catalyzes oxidative elimination of the pendant methyl group at C-12 of paspaline and generates the C-10 ketone to yield 13-desoxypaxilline (PubMed:32077051). The cytochrome P450 monooxygenase idtQ may catalyze the C-13 oxidation of 13-desoxypaxilline to afford paxilline (Probable). Considering that both paspalicine and paxilline were detected in C.paspali, idtQ also catalyzes the formation of paspalinine from 13-desoxypaxilline via paspalicine as an intermediate (Probable). Finally, the alpha-prenyltransferase idtF prenylates paspalinine at the C-20 or the C-21 positions to yield paspalitrems A and C, respectively (PubMed:32077051). The hydroxylation of paspalitrem A at C-32 by a still unknown oxidase affords paspalitrem B (Probable).</text>
</comment>
<comment type="cofactor">
    <cofactor evidence="1">
        <name>heme</name>
        <dbReference type="ChEBI" id="CHEBI:30413"/>
    </cofactor>
</comment>
<comment type="pathway">
    <text evidence="5 8">Secondary metabolite biosynthesis.</text>
</comment>
<comment type="disruption phenotype">
    <text evidence="5">Abolishes the production of all paspalitrems, but accumulates paspaline.</text>
</comment>
<comment type="similarity">
    <text evidence="7">Belongs to the cytochrome P450 family.</text>
</comment>
<keyword id="KW-0349">Heme</keyword>
<keyword id="KW-0408">Iron</keyword>
<keyword id="KW-0479">Metal-binding</keyword>
<keyword id="KW-0503">Monooxygenase</keyword>
<keyword id="KW-0560">Oxidoreductase</keyword>
<keyword id="KW-0732">Signal</keyword>
<gene>
    <name evidence="6" type="primary">idtP</name>
</gene>
<evidence type="ECO:0000250" key="1">
    <source>
        <dbReference type="UniProtKB" id="P04798"/>
    </source>
</evidence>
<evidence type="ECO:0000255" key="2"/>
<evidence type="ECO:0000269" key="3">
    <source>
    </source>
</evidence>
<evidence type="ECO:0000269" key="4">
    <source>
    </source>
</evidence>
<evidence type="ECO:0000269" key="5">
    <source>
    </source>
</evidence>
<evidence type="ECO:0000303" key="6">
    <source>
    </source>
</evidence>
<evidence type="ECO:0000305" key="7"/>
<evidence type="ECO:0000305" key="8">
    <source>
    </source>
</evidence>
<evidence type="ECO:0000305" key="9">
    <source>
    </source>
</evidence>
<dbReference type="EC" id="1.-.-.-" evidence="9"/>
<dbReference type="EMBL" id="JN613321">
    <property type="protein sequence ID" value="AFO85418.1"/>
    <property type="molecule type" value="Genomic_DNA"/>
</dbReference>
<dbReference type="SMR" id="J7FIP8"/>
<dbReference type="GO" id="GO:0020037">
    <property type="term" value="F:heme binding"/>
    <property type="evidence" value="ECO:0007669"/>
    <property type="project" value="InterPro"/>
</dbReference>
<dbReference type="GO" id="GO:0005506">
    <property type="term" value="F:iron ion binding"/>
    <property type="evidence" value="ECO:0007669"/>
    <property type="project" value="InterPro"/>
</dbReference>
<dbReference type="GO" id="GO:0004497">
    <property type="term" value="F:monooxygenase activity"/>
    <property type="evidence" value="ECO:0007669"/>
    <property type="project" value="UniProtKB-KW"/>
</dbReference>
<dbReference type="GO" id="GO:0016705">
    <property type="term" value="F:oxidoreductase activity, acting on paired donors, with incorporation or reduction of molecular oxygen"/>
    <property type="evidence" value="ECO:0007669"/>
    <property type="project" value="InterPro"/>
</dbReference>
<dbReference type="GO" id="GO:0019748">
    <property type="term" value="P:secondary metabolic process"/>
    <property type="evidence" value="ECO:0007669"/>
    <property type="project" value="UniProtKB-ARBA"/>
</dbReference>
<dbReference type="CDD" id="cd11041">
    <property type="entry name" value="CYP503A1-like"/>
    <property type="match status" value="1"/>
</dbReference>
<dbReference type="Gene3D" id="1.10.630.10">
    <property type="entry name" value="Cytochrome P450"/>
    <property type="match status" value="1"/>
</dbReference>
<dbReference type="InterPro" id="IPR001128">
    <property type="entry name" value="Cyt_P450"/>
</dbReference>
<dbReference type="InterPro" id="IPR002403">
    <property type="entry name" value="Cyt_P450_E_grp-IV"/>
</dbReference>
<dbReference type="InterPro" id="IPR036396">
    <property type="entry name" value="Cyt_P450_sf"/>
</dbReference>
<dbReference type="PANTHER" id="PTHR46206">
    <property type="entry name" value="CYTOCHROME P450"/>
    <property type="match status" value="1"/>
</dbReference>
<dbReference type="PANTHER" id="PTHR46206:SF7">
    <property type="entry name" value="P450, PUTATIVE (EUROFUNG)-RELATED"/>
    <property type="match status" value="1"/>
</dbReference>
<dbReference type="Pfam" id="PF00067">
    <property type="entry name" value="p450"/>
    <property type="match status" value="1"/>
</dbReference>
<dbReference type="PRINTS" id="PR00465">
    <property type="entry name" value="EP450IV"/>
</dbReference>
<dbReference type="SUPFAM" id="SSF48264">
    <property type="entry name" value="Cytochrome P450"/>
    <property type="match status" value="1"/>
</dbReference>
<feature type="signal peptide" evidence="2">
    <location>
        <begin position="1"/>
        <end position="20"/>
    </location>
</feature>
<feature type="chain" id="PRO_5003792117" description="Cytochrome P450 monooxygenase idtP">
    <location>
        <begin position="21"/>
        <end position="498"/>
    </location>
</feature>
<feature type="binding site" description="axial binding residue" evidence="1">
    <location>
        <position position="439"/>
    </location>
    <ligand>
        <name>heme</name>
        <dbReference type="ChEBI" id="CHEBI:30413"/>
    </ligand>
    <ligandPart>
        <name>Fe</name>
        <dbReference type="ChEBI" id="CHEBI:18248"/>
    </ligandPart>
</feature>
<sequence>MFLLHILAIGACLLWYFVRSDKRKQGSNIPTIRRWPALFPEFLDRLSYNSCAARLVENGYREHKDRPFRLLKMDMDLVVIPLKYAQEMRALTSDELDPLTAVFDDNVGKVTGILLDSQLHTHAIQRRLTPRLPNIIPAMMDELNYAFQQVIPSEAGERLQTSWVPINPYDMVLELSTRAAARLFVGEPICRDEVFLKTSAAYSRNIFDTIHVSRSLGHIITPYLGSLIPSVRQFHQQFEYIQNLVLGEIAHRKQHSEDNKADDFLQWCMELARTKEESTPTALAQRTVGILSMAVVHTSAMATTHLLFDMISNQELREQLRTEQKQVLKQGWMGITQQTMLDMKQLDSVMRESQRINPVGEFTFRRIVRKPITLSDGFQLHPGQQIAIAARCINTDGDVLPDAETFKPMRWMEKESAASTGFAHSSDSNLHFGLGRYACPGRFLASYMIKAIISRVLFDYEFKLQDDSAAGRPPNLIHGDKIFPSRDVTVLFRRRHDE</sequence>
<accession>J7FIP8</accession>
<protein>
    <recommendedName>
        <fullName evidence="6">Cytochrome P450 monooxygenase idtP</fullName>
        <ecNumber evidence="9">1.-.-.-</ecNumber>
    </recommendedName>
    <alternativeName>
        <fullName evidence="6">Indole-diterpene biosynthesis cluster protein P</fullName>
    </alternativeName>
</protein>
<reference key="1">
    <citation type="journal article" date="2013" name="PLoS Genet.">
        <title>Plant-symbiotic fungi as chemical engineers: Multi-genome analysis of the Clavicipitaceae reveals dynamics of alkaloid loci.</title>
        <authorList>
            <person name="Schardl C.L."/>
            <person name="Young C.A."/>
            <person name="Hesse U."/>
            <person name="Amyotte S.G."/>
            <person name="Andreeva K."/>
            <person name="Calie P.J."/>
            <person name="Fleetwood D.J."/>
            <person name="Haws D.C."/>
            <person name="Moore N."/>
            <person name="Oeser B."/>
            <person name="Panaccione D.G."/>
            <person name="Schweri K.K."/>
            <person name="Voisey C.R."/>
            <person name="Farman M.L."/>
            <person name="Jaromczyk J.W."/>
            <person name="Roe B.A."/>
            <person name="O'Sullivan D.M."/>
            <person name="Scott B."/>
            <person name="Tudzynski P."/>
            <person name="An Z."/>
            <person name="Arnaoudova E.G."/>
            <person name="Bullock C.T."/>
            <person name="Charlton N.D."/>
            <person name="Chen L."/>
            <person name="Cox M."/>
            <person name="Dinkins R.D."/>
            <person name="Florea S."/>
            <person name="Glenn A.E."/>
            <person name="Gordon A."/>
            <person name="Gueldener U."/>
            <person name="Harris D.R."/>
            <person name="Hollin W."/>
            <person name="Jaromczyk J."/>
            <person name="Johnson R.D."/>
            <person name="Khan A.K."/>
            <person name="Leistner E."/>
            <person name="Leuchtmann A."/>
            <person name="Li C."/>
            <person name="Liu J."/>
            <person name="Liu J."/>
            <person name="Liu M."/>
            <person name="Mace W."/>
            <person name="Machado C."/>
            <person name="Nagabhyru P."/>
            <person name="Pan J."/>
            <person name="Schmid J."/>
            <person name="Sugawara K."/>
            <person name="Steiner U."/>
            <person name="Takach J.E."/>
            <person name="Tanaka E."/>
            <person name="Webb J.S."/>
            <person name="Wilson E.V."/>
            <person name="Wiseman J.L."/>
            <person name="Yoshida R."/>
            <person name="Zeng Z."/>
        </authorList>
    </citation>
    <scope>NUCLEOTIDE SEQUENCE [GENOMIC DNA]</scope>
    <scope>IDENTIFICATION</scope>
    <scope>FUNCTION</scope>
    <source>
        <strain>RRC-1481</strain>
    </source>
</reference>
<reference key="2">
    <citation type="journal article" date="2018" name="Appl. Microbiol. Biotechnol.">
        <title>Inactivation of the indole-diterpene biosynthetic gene cluster of Claviceps paspali by Agrobacterium-mediated gene replacement.</title>
        <authorList>
            <person name="Kozak L."/>
            <person name="Szilagyi Z."/>
            <person name="Vago B."/>
            <person name="Kakuk A."/>
            <person name="Toth L."/>
            <person name="Molnar I."/>
            <person name="Pocsi I."/>
        </authorList>
    </citation>
    <scope>FUNCTION</scope>
    <scope>PATHWAY</scope>
</reference>
<reference key="3">
    <citation type="journal article" date="2020" name="Folia Microbiol. (Praha)">
        <title>Functional characterization of the idtF and idtP genes in the Claviceps paspali indole diterpene biosynthetic gene cluster.</title>
        <authorList>
            <person name="Kozak L."/>
            <person name="Szilagyi Z."/>
            <person name="Toth L."/>
            <person name="Pocsi I."/>
            <person name="Molnar I."/>
        </authorList>
    </citation>
    <scope>FUNCTION</scope>
    <scope>DISRUPTION PHENOTYPE</scope>
    <scope>PATHWAY</scope>
</reference>
<organism>
    <name type="scientific">Claviceps paspali</name>
    <name type="common">Rye ergot fungus</name>
    <dbReference type="NCBI Taxonomy" id="40601"/>
    <lineage>
        <taxon>Eukaryota</taxon>
        <taxon>Fungi</taxon>
        <taxon>Dikarya</taxon>
        <taxon>Ascomycota</taxon>
        <taxon>Pezizomycotina</taxon>
        <taxon>Sordariomycetes</taxon>
        <taxon>Hypocreomycetidae</taxon>
        <taxon>Hypocreales</taxon>
        <taxon>Clavicipitaceae</taxon>
        <taxon>Claviceps</taxon>
    </lineage>
</organism>